<evidence type="ECO:0000250" key="1">
    <source>
        <dbReference type="UniProtKB" id="P62888"/>
    </source>
</evidence>
<evidence type="ECO:0000305" key="2"/>
<protein>
    <recommendedName>
        <fullName evidence="2">Large ribosomal subunit protein eL30</fullName>
    </recommendedName>
    <alternativeName>
        <fullName>60S ribosomal protein L30</fullName>
    </alternativeName>
</protein>
<keyword id="KW-0002">3D-structure</keyword>
<keyword id="KW-0963">Cytoplasm</keyword>
<keyword id="KW-1185">Reference proteome</keyword>
<keyword id="KW-0687">Ribonucleoprotein</keyword>
<keyword id="KW-0689">Ribosomal protein</keyword>
<reference key="1">
    <citation type="journal article" date="1993" name="Biochim. Biophys. Acta">
        <title>The structure of the gene encoding chicken ribosomal protein L30.</title>
        <authorList>
            <person name="Nakasone K."/>
            <person name="Kenmochi N."/>
            <person name="Toku S."/>
            <person name="Tanaka T."/>
        </authorList>
    </citation>
    <scope>NUCLEOTIDE SEQUENCE [GENOMIC DNA]</scope>
    <source>
        <tissue>Liver</tissue>
    </source>
</reference>
<proteinExistence type="evidence at protein level"/>
<feature type="chain" id="PRO_0000146124" description="Large ribosomal subunit protein eL30">
    <location>
        <begin position="1"/>
        <end position="115"/>
    </location>
</feature>
<gene>
    <name type="primary">RPL30</name>
</gene>
<comment type="function">
    <text evidence="1">Component of the large ribosomal subunit. The ribosome is a large ribonucleoprotein complex responsible for the synthesis of proteins in the cell.</text>
</comment>
<comment type="subunit">
    <text evidence="1">Component of the large ribosomal subunit.</text>
</comment>
<comment type="subcellular location">
    <subcellularLocation>
        <location evidence="1">Cytoplasm</location>
    </subcellularLocation>
</comment>
<comment type="similarity">
    <text evidence="2">Belongs to the eukaryotic ribosomal protein eL30 family.</text>
</comment>
<organism>
    <name type="scientific">Gallus gallus</name>
    <name type="common">Chicken</name>
    <dbReference type="NCBI Taxonomy" id="9031"/>
    <lineage>
        <taxon>Eukaryota</taxon>
        <taxon>Metazoa</taxon>
        <taxon>Chordata</taxon>
        <taxon>Craniata</taxon>
        <taxon>Vertebrata</taxon>
        <taxon>Euteleostomi</taxon>
        <taxon>Archelosauria</taxon>
        <taxon>Archosauria</taxon>
        <taxon>Dinosauria</taxon>
        <taxon>Saurischia</taxon>
        <taxon>Theropoda</taxon>
        <taxon>Coelurosauria</taxon>
        <taxon>Aves</taxon>
        <taxon>Neognathae</taxon>
        <taxon>Galloanserae</taxon>
        <taxon>Galliformes</taxon>
        <taxon>Phasianidae</taxon>
        <taxon>Phasianinae</taxon>
        <taxon>Gallus</taxon>
    </lineage>
</organism>
<sequence length="115" mass="12814">MVAAKKTKKSLESINSRLQLVMKSGKYVLGYKQTLKMIRQGKAKLVILANNCPALRKSEIEYYAMLAKTGVHHYSGNNIELGTACGKYYRVCTLAIIDPGDSDIIRSMPEQTSEK</sequence>
<dbReference type="EMBL" id="D14521">
    <property type="protein sequence ID" value="BAA03394.1"/>
    <property type="molecule type" value="Genomic_DNA"/>
</dbReference>
<dbReference type="PIR" id="S34608">
    <property type="entry name" value="S34608"/>
</dbReference>
<dbReference type="RefSeq" id="NP_001007968.1">
    <property type="nucleotide sequence ID" value="NM_001007967.2"/>
</dbReference>
<dbReference type="RefSeq" id="XP_015138440.1">
    <property type="nucleotide sequence ID" value="XM_015282954.1"/>
</dbReference>
<dbReference type="PDB" id="6KVM">
    <property type="method" value="X-ray"/>
    <property type="resolution" value="1.90 A"/>
    <property type="chains" value="C=99-115"/>
</dbReference>
<dbReference type="PDB" id="8JR4">
    <property type="method" value="X-ray"/>
    <property type="resolution" value="2.30 A"/>
    <property type="chains" value="E=102-113"/>
</dbReference>
<dbReference type="PDB" id="8Q7Z">
    <property type="method" value="EM"/>
    <property type="resolution" value="2.50 A"/>
    <property type="chains" value="Bc=1-115"/>
</dbReference>
<dbReference type="PDB" id="8Q87">
    <property type="method" value="EM"/>
    <property type="resolution" value="2.40 A"/>
    <property type="chains" value="Bc=1-115"/>
</dbReference>
<dbReference type="PDBsum" id="6KVM"/>
<dbReference type="PDBsum" id="8JR4"/>
<dbReference type="PDBsum" id="8Q7Z"/>
<dbReference type="PDBsum" id="8Q87"/>
<dbReference type="SMR" id="P67883"/>
<dbReference type="BioGRID" id="685533">
    <property type="interactions" value="1"/>
</dbReference>
<dbReference type="FunCoup" id="P67883">
    <property type="interactions" value="2540"/>
</dbReference>
<dbReference type="STRING" id="9031.ENSGALP00000054554"/>
<dbReference type="PaxDb" id="9031-ENSGALP00000013355"/>
<dbReference type="GeneID" id="425416"/>
<dbReference type="KEGG" id="gga:425416"/>
<dbReference type="CTD" id="6156"/>
<dbReference type="VEuPathDB" id="HostDB:geneid_425416"/>
<dbReference type="eggNOG" id="KOG2988">
    <property type="taxonomic scope" value="Eukaryota"/>
</dbReference>
<dbReference type="InParanoid" id="P67883"/>
<dbReference type="OMA" id="YFQGGNN"/>
<dbReference type="OrthoDB" id="1928736at2759"/>
<dbReference type="PhylomeDB" id="P67883"/>
<dbReference type="TreeFam" id="TF300252"/>
<dbReference type="Reactome" id="R-GGA-1799339">
    <property type="pathway name" value="SRP-dependent cotranslational protein targeting to membrane"/>
</dbReference>
<dbReference type="Reactome" id="R-GGA-72689">
    <property type="pathway name" value="Formation of a pool of free 40S subunits"/>
</dbReference>
<dbReference type="Reactome" id="R-GGA-72706">
    <property type="pathway name" value="GTP hydrolysis and joining of the 60S ribosomal subunit"/>
</dbReference>
<dbReference type="Reactome" id="R-GGA-975956">
    <property type="pathway name" value="Nonsense Mediated Decay (NMD) independent of the Exon Junction Complex (EJC)"/>
</dbReference>
<dbReference type="Reactome" id="R-GGA-975957">
    <property type="pathway name" value="Nonsense Mediated Decay (NMD) enhanced by the Exon Junction Complex (EJC)"/>
</dbReference>
<dbReference type="PRO" id="PR:P67883"/>
<dbReference type="Proteomes" id="UP000000539">
    <property type="component" value="Chromosome 2"/>
</dbReference>
<dbReference type="Bgee" id="ENSGALG00000029897">
    <property type="expression patterns" value="Expressed in granulocyte and 12 other cell types or tissues"/>
</dbReference>
<dbReference type="GO" id="GO:0022625">
    <property type="term" value="C:cytosolic large ribosomal subunit"/>
    <property type="evidence" value="ECO:0000318"/>
    <property type="project" value="GO_Central"/>
</dbReference>
<dbReference type="GO" id="GO:0003723">
    <property type="term" value="F:RNA binding"/>
    <property type="evidence" value="ECO:0000318"/>
    <property type="project" value="GO_Central"/>
</dbReference>
<dbReference type="GO" id="GO:0003735">
    <property type="term" value="F:structural constituent of ribosome"/>
    <property type="evidence" value="ECO:0000318"/>
    <property type="project" value="GO_Central"/>
</dbReference>
<dbReference type="FunFam" id="3.30.1330.30:FF:000001">
    <property type="entry name" value="60S ribosomal protein L30"/>
    <property type="match status" value="1"/>
</dbReference>
<dbReference type="Gene3D" id="3.30.1330.30">
    <property type="match status" value="1"/>
</dbReference>
<dbReference type="HAMAP" id="MF_00481">
    <property type="entry name" value="Ribosomal_eL30"/>
    <property type="match status" value="1"/>
</dbReference>
<dbReference type="InterPro" id="IPR000231">
    <property type="entry name" value="Ribosomal_eL30"/>
</dbReference>
<dbReference type="InterPro" id="IPR039109">
    <property type="entry name" value="Ribosomal_eL30-like"/>
</dbReference>
<dbReference type="InterPro" id="IPR029064">
    <property type="entry name" value="Ribosomal_eL30-like_sf"/>
</dbReference>
<dbReference type="InterPro" id="IPR022991">
    <property type="entry name" value="Ribosomal_eL30_CS"/>
</dbReference>
<dbReference type="InterPro" id="IPR004038">
    <property type="entry name" value="Ribosomal_eL8/eL30/eS12/Gad45"/>
</dbReference>
<dbReference type="NCBIfam" id="NF002172">
    <property type="entry name" value="PRK01018.1"/>
    <property type="match status" value="1"/>
</dbReference>
<dbReference type="PANTHER" id="PTHR11449">
    <property type="entry name" value="RIBOSOMAL PROTEIN L30"/>
    <property type="match status" value="1"/>
</dbReference>
<dbReference type="Pfam" id="PF01248">
    <property type="entry name" value="Ribosomal_L7Ae"/>
    <property type="match status" value="1"/>
</dbReference>
<dbReference type="SUPFAM" id="SSF55315">
    <property type="entry name" value="L30e-like"/>
    <property type="match status" value="1"/>
</dbReference>
<dbReference type="PROSITE" id="PS00709">
    <property type="entry name" value="RIBOSOMAL_L30E_1"/>
    <property type="match status" value="1"/>
</dbReference>
<dbReference type="PROSITE" id="PS00993">
    <property type="entry name" value="RIBOSOMAL_L30E_2"/>
    <property type="match status" value="1"/>
</dbReference>
<name>RL30_CHICK</name>
<accession>P67883</accession>
<accession>P47833</accession>
<accession>P58373</accession>